<feature type="signal peptide" evidence="2">
    <location>
        <begin position="1"/>
        <end position="23"/>
    </location>
</feature>
<feature type="chain" id="PRO_0000045470" description="IAA-amino acid hydrolase ILR1-like 4">
    <location>
        <begin position="24"/>
        <end position="440"/>
    </location>
</feature>
<feature type="short sequence motif" description="Prevents secretion from ER" evidence="3">
    <location>
        <begin position="437"/>
        <end position="440"/>
    </location>
</feature>
<feature type="binding site" evidence="1">
    <location>
        <position position="134"/>
    </location>
    <ligand>
        <name>Mn(2+)</name>
        <dbReference type="ChEBI" id="CHEBI:29035"/>
        <label>1</label>
    </ligand>
</feature>
<feature type="binding site" evidence="1">
    <location>
        <position position="134"/>
    </location>
    <ligand>
        <name>Mn(2+)</name>
        <dbReference type="ChEBI" id="CHEBI:29035"/>
        <label>2</label>
    </ligand>
</feature>
<feature type="binding site" evidence="1">
    <location>
        <position position="136"/>
    </location>
    <ligand>
        <name>Mn(2+)</name>
        <dbReference type="ChEBI" id="CHEBI:29035"/>
        <label>2</label>
    </ligand>
</feature>
<feature type="binding site" evidence="1">
    <location>
        <position position="170"/>
    </location>
    <ligand>
        <name>Mn(2+)</name>
        <dbReference type="ChEBI" id="CHEBI:29035"/>
        <label>1</label>
    </ligand>
</feature>
<feature type="binding site" evidence="1">
    <location>
        <position position="194"/>
    </location>
    <ligand>
        <name>Mn(2+)</name>
        <dbReference type="ChEBI" id="CHEBI:29035"/>
        <label>2</label>
    </ligand>
</feature>
<feature type="binding site" evidence="1">
    <location>
        <position position="397"/>
    </location>
    <ligand>
        <name>Mn(2+)</name>
        <dbReference type="ChEBI" id="CHEBI:29035"/>
        <label>1</label>
    </ligand>
</feature>
<feature type="mutagenesis site" description="In iar3-1; reduces activity." evidence="4">
    <original>S</original>
    <variation>L</variation>
    <location>
        <position position="206"/>
    </location>
</feature>
<feature type="mutagenesis site" description="In iar3-2; abolishes activity." evidence="4">
    <original>G</original>
    <variation>E</variation>
    <location>
        <position position="224"/>
    </location>
</feature>
<feature type="mutagenesis site" description="In iar3-4; reduces activity." evidence="4">
    <original>G</original>
    <variation>E</variation>
    <location>
        <position position="226"/>
    </location>
</feature>
<feature type="mutagenesis site" description="In iar3-3; reduces activity." evidence="4">
    <original>A</original>
    <variation>T</variation>
    <location>
        <position position="230"/>
    </location>
</feature>
<feature type="sequence conflict" description="In Ref. 1; CAA73905." evidence="11" ref="1">
    <original>M</original>
    <variation>I</variation>
    <location>
        <position position="211"/>
    </location>
</feature>
<feature type="sequence conflict" description="In Ref. 1; CAA73905." evidence="11" ref="1">
    <original>A</original>
    <variation>AFST</variation>
    <location>
        <position position="291"/>
    </location>
</feature>
<feature type="sequence conflict" description="In Ref. 1; CAA73905." evidence="11" ref="1">
    <original>EEEKP</original>
    <variation>ARGET</variation>
    <location>
        <begin position="325"/>
        <end position="329"/>
    </location>
</feature>
<dbReference type="EC" id="3.5.1.-" evidence="11"/>
<dbReference type="EC" id="3.5.1.127" evidence="7"/>
<dbReference type="EMBL" id="Y13577">
    <property type="protein sequence ID" value="CAA73905.1"/>
    <property type="molecule type" value="mRNA"/>
</dbReference>
<dbReference type="EMBL" id="AF081067">
    <property type="protein sequence ID" value="AAC32192.1"/>
    <property type="molecule type" value="Genomic_DNA"/>
</dbReference>
<dbReference type="EMBL" id="AC025294">
    <property type="protein sequence ID" value="AAG50883.1"/>
    <property type="molecule type" value="Genomic_DNA"/>
</dbReference>
<dbReference type="EMBL" id="CP002684">
    <property type="protein sequence ID" value="AEE32712.1"/>
    <property type="molecule type" value="Genomic_DNA"/>
</dbReference>
<dbReference type="EMBL" id="AF375444">
    <property type="protein sequence ID" value="AAK53028.1"/>
    <property type="molecule type" value="mRNA"/>
</dbReference>
<dbReference type="EMBL" id="AY143961">
    <property type="protein sequence ID" value="AAN28900.1"/>
    <property type="molecule type" value="mRNA"/>
</dbReference>
<dbReference type="PIR" id="F96556">
    <property type="entry name" value="F96556"/>
</dbReference>
<dbReference type="RefSeq" id="NP_175587.1">
    <property type="nucleotide sequence ID" value="NM_104055.4"/>
</dbReference>
<dbReference type="SMR" id="O04373"/>
<dbReference type="BioGRID" id="26827">
    <property type="interactions" value="1"/>
</dbReference>
<dbReference type="FunCoup" id="O04373">
    <property type="interactions" value="608"/>
</dbReference>
<dbReference type="STRING" id="3702.O04373"/>
<dbReference type="ChEMBL" id="CHEMBL1687678"/>
<dbReference type="MEROPS" id="M20.A04"/>
<dbReference type="iPTMnet" id="O04373"/>
<dbReference type="PaxDb" id="3702-AT1G51760.1"/>
<dbReference type="ProteomicsDB" id="250635"/>
<dbReference type="EnsemblPlants" id="AT1G51760.1">
    <property type="protein sequence ID" value="AT1G51760.1"/>
    <property type="gene ID" value="AT1G51760"/>
</dbReference>
<dbReference type="GeneID" id="841602"/>
<dbReference type="Gramene" id="AT1G51760.1">
    <property type="protein sequence ID" value="AT1G51760.1"/>
    <property type="gene ID" value="AT1G51760"/>
</dbReference>
<dbReference type="KEGG" id="ath:AT1G51760"/>
<dbReference type="Araport" id="AT1G51760"/>
<dbReference type="TAIR" id="AT1G51760">
    <property type="gene designation" value="IAR3"/>
</dbReference>
<dbReference type="eggNOG" id="ENOG502QQEM">
    <property type="taxonomic scope" value="Eukaryota"/>
</dbReference>
<dbReference type="HOGENOM" id="CLU_023257_0_0_1"/>
<dbReference type="InParanoid" id="O04373"/>
<dbReference type="OMA" id="THLWATE"/>
<dbReference type="PhylomeDB" id="O04373"/>
<dbReference type="BioCyc" id="ARA:MONOMER-4141"/>
<dbReference type="BioCyc" id="MetaCyc:MONOMER-4141"/>
<dbReference type="PRO" id="PR:O04373"/>
<dbReference type="Proteomes" id="UP000006548">
    <property type="component" value="Chromosome 1"/>
</dbReference>
<dbReference type="ExpressionAtlas" id="O04373">
    <property type="expression patterns" value="baseline and differential"/>
</dbReference>
<dbReference type="GO" id="GO:0005783">
    <property type="term" value="C:endoplasmic reticulum"/>
    <property type="evidence" value="ECO:0007005"/>
    <property type="project" value="TAIR"/>
</dbReference>
<dbReference type="GO" id="GO:0005788">
    <property type="term" value="C:endoplasmic reticulum lumen"/>
    <property type="evidence" value="ECO:0007669"/>
    <property type="project" value="UniProtKB-SubCell"/>
</dbReference>
<dbReference type="GO" id="GO:0005634">
    <property type="term" value="C:nucleus"/>
    <property type="evidence" value="ECO:0007005"/>
    <property type="project" value="TAIR"/>
</dbReference>
<dbReference type="GO" id="GO:0010179">
    <property type="term" value="F:IAA-Ala conjugate hydrolase activity"/>
    <property type="evidence" value="ECO:0000314"/>
    <property type="project" value="TAIR"/>
</dbReference>
<dbReference type="GO" id="GO:0046872">
    <property type="term" value="F:metal ion binding"/>
    <property type="evidence" value="ECO:0007669"/>
    <property type="project" value="UniProtKB-KW"/>
</dbReference>
<dbReference type="GO" id="GO:0009850">
    <property type="term" value="P:auxin metabolic process"/>
    <property type="evidence" value="ECO:0007669"/>
    <property type="project" value="InterPro"/>
</dbReference>
<dbReference type="GO" id="GO:0009611">
    <property type="term" value="P:response to wounding"/>
    <property type="evidence" value="ECO:0000270"/>
    <property type="project" value="TAIR"/>
</dbReference>
<dbReference type="CDD" id="cd08017">
    <property type="entry name" value="M20_IAA_Hyd"/>
    <property type="match status" value="1"/>
</dbReference>
<dbReference type="FunFam" id="3.30.70.360:FF:000001">
    <property type="entry name" value="N-acetyldiaminopimelate deacetylase"/>
    <property type="match status" value="1"/>
</dbReference>
<dbReference type="Gene3D" id="3.30.70.360">
    <property type="match status" value="1"/>
</dbReference>
<dbReference type="Gene3D" id="3.40.630.10">
    <property type="entry name" value="Zn peptidases"/>
    <property type="match status" value="1"/>
</dbReference>
<dbReference type="InterPro" id="IPR017439">
    <property type="entry name" value="Amidohydrolase"/>
</dbReference>
<dbReference type="InterPro" id="IPR036264">
    <property type="entry name" value="Bact_exopeptidase_dim_dom"/>
</dbReference>
<dbReference type="InterPro" id="IPR044757">
    <property type="entry name" value="ILR1-like_Hyd"/>
</dbReference>
<dbReference type="InterPro" id="IPR002933">
    <property type="entry name" value="Peptidase_M20"/>
</dbReference>
<dbReference type="InterPro" id="IPR011650">
    <property type="entry name" value="Peptidase_M20_dimer"/>
</dbReference>
<dbReference type="NCBIfam" id="TIGR01891">
    <property type="entry name" value="amidohydrolases"/>
    <property type="match status" value="1"/>
</dbReference>
<dbReference type="PANTHER" id="PTHR11014:SF171">
    <property type="entry name" value="IAA-AMINO ACID HYDROLASE ILR1-LIKE 4-RELATED"/>
    <property type="match status" value="1"/>
</dbReference>
<dbReference type="PANTHER" id="PTHR11014">
    <property type="entry name" value="PEPTIDASE M20 FAMILY MEMBER"/>
    <property type="match status" value="1"/>
</dbReference>
<dbReference type="Pfam" id="PF07687">
    <property type="entry name" value="M20_dimer"/>
    <property type="match status" value="1"/>
</dbReference>
<dbReference type="Pfam" id="PF01546">
    <property type="entry name" value="Peptidase_M20"/>
    <property type="match status" value="1"/>
</dbReference>
<dbReference type="PIRSF" id="PIRSF005962">
    <property type="entry name" value="Pept_M20D_amidohydro"/>
    <property type="match status" value="1"/>
</dbReference>
<dbReference type="SUPFAM" id="SSF55031">
    <property type="entry name" value="Bacterial exopeptidase dimerisation domain"/>
    <property type="match status" value="1"/>
</dbReference>
<dbReference type="SUPFAM" id="SSF53187">
    <property type="entry name" value="Zn-dependent exopeptidases"/>
    <property type="match status" value="1"/>
</dbReference>
<dbReference type="PROSITE" id="PS00014">
    <property type="entry name" value="ER_TARGET"/>
    <property type="match status" value="1"/>
</dbReference>
<keyword id="KW-0256">Endoplasmic reticulum</keyword>
<keyword id="KW-0378">Hydrolase</keyword>
<keyword id="KW-0464">Manganese</keyword>
<keyword id="KW-0479">Metal-binding</keyword>
<keyword id="KW-1185">Reference proteome</keyword>
<keyword id="KW-0732">Signal</keyword>
<organism>
    <name type="scientific">Arabidopsis thaliana</name>
    <name type="common">Mouse-ear cress</name>
    <dbReference type="NCBI Taxonomy" id="3702"/>
    <lineage>
        <taxon>Eukaryota</taxon>
        <taxon>Viridiplantae</taxon>
        <taxon>Streptophyta</taxon>
        <taxon>Embryophyta</taxon>
        <taxon>Tracheophyta</taxon>
        <taxon>Spermatophyta</taxon>
        <taxon>Magnoliopsida</taxon>
        <taxon>eudicotyledons</taxon>
        <taxon>Gunneridae</taxon>
        <taxon>Pentapetalae</taxon>
        <taxon>rosids</taxon>
        <taxon>malvids</taxon>
        <taxon>Brassicales</taxon>
        <taxon>Brassicaceae</taxon>
        <taxon>Camelineae</taxon>
        <taxon>Arabidopsis</taxon>
    </lineage>
</organism>
<sequence length="440" mass="48263">MSFFKWVSFVLILHLLNPTLISCSSNGLSQIPSKFLTLAKRNDFFDWMVGIRRRIHENPELGYEEVETSKLVRAELEKMGVSYKYPVAVTGVVGYVGTGHAPFVALRADMDALAMQEMVEWEHKSKVPGKMHACGHDAHTTMLLGAAKLLKEHEEELQGTVVLVFQPAEEGGGGAKKIVEAGVLENVSAIFGLHVTNQLALGQVSSREGPMLAGSGFFKAKISGKGGHAALPQHTIDPILAASNVIVSLQHLVSREADPLDSQVVTVAKFEGGGAFNVIPDSVTIGGTFRAFSTKSFMQLKKRIEQVITRQASVNMCNATVDFIEEEKPFFPPTVNDKALHQFFKNVSGDMLGIENYVEMQPLMGSEDFSFYQQAIPGHFSFVGMQNKARSPMASPHSPYFEVNEELLPYGASLHASMATRYLLELKASTLNKSNKKDEL</sequence>
<name>ILL4_ARATH</name>
<protein>
    <recommendedName>
        <fullName evidence="9">IAA-amino acid hydrolase ILR1-like 4</fullName>
        <ecNumber evidence="11">3.5.1.-</ecNumber>
    </recommendedName>
    <alternativeName>
        <fullName evidence="11">jasmonoyl-L-amino acid hydrolase</fullName>
        <ecNumber evidence="7">3.5.1.127</ecNumber>
    </alternativeName>
</protein>
<accession>O04373</accession>
<accession>O81642</accession>
<reference key="1">
    <citation type="journal article" date="1997" name="Plant Physiol.">
        <title>Jasmonic acid-dependent and -independent signaling pathways control wound-induced gene activation in Arabidopsis thaliana.</title>
        <authorList>
            <person name="Titarenko E."/>
            <person name="Rojo E."/>
            <person name="Leon J."/>
            <person name="Sanchez-Serrano J.J."/>
        </authorList>
    </citation>
    <scope>NUCLEOTIDE SEQUENCE [MRNA]</scope>
    <scope>INDUCTION</scope>
</reference>
<reference key="2">
    <citation type="journal article" date="1999" name="Plant Cell">
        <title>IAR3 encodes an auxin conjugate hydrolase from Arabidopsis.</title>
        <authorList>
            <person name="Davies R.T."/>
            <person name="Goetz D.H."/>
            <person name="Lasswell J.E."/>
            <person name="Anderson M.N."/>
            <person name="Bartel B."/>
        </authorList>
    </citation>
    <scope>NUCLEOTIDE SEQUENCE [GENOMIC DNA]</scope>
    <scope>FUNCTION</scope>
    <scope>SUBSTRATE SPECIFICITY</scope>
    <scope>TISSUE SPECIFICITY</scope>
    <scope>MUTAGENESIS OF SER-206; GLY-224; GLY-226 AND ALA-230</scope>
    <source>
        <strain>cv. Columbia</strain>
    </source>
</reference>
<reference key="3">
    <citation type="journal article" date="2000" name="Nature">
        <title>Sequence and analysis of chromosome 1 of the plant Arabidopsis thaliana.</title>
        <authorList>
            <person name="Theologis A."/>
            <person name="Ecker J.R."/>
            <person name="Palm C.J."/>
            <person name="Federspiel N.A."/>
            <person name="Kaul S."/>
            <person name="White O."/>
            <person name="Alonso J."/>
            <person name="Altafi H."/>
            <person name="Araujo R."/>
            <person name="Bowman C.L."/>
            <person name="Brooks S.Y."/>
            <person name="Buehler E."/>
            <person name="Chan A."/>
            <person name="Chao Q."/>
            <person name="Chen H."/>
            <person name="Cheuk R.F."/>
            <person name="Chin C.W."/>
            <person name="Chung M.K."/>
            <person name="Conn L."/>
            <person name="Conway A.B."/>
            <person name="Conway A.R."/>
            <person name="Creasy T.H."/>
            <person name="Dewar K."/>
            <person name="Dunn P."/>
            <person name="Etgu P."/>
            <person name="Feldblyum T.V."/>
            <person name="Feng J.-D."/>
            <person name="Fong B."/>
            <person name="Fujii C.Y."/>
            <person name="Gill J.E."/>
            <person name="Goldsmith A.D."/>
            <person name="Haas B."/>
            <person name="Hansen N.F."/>
            <person name="Hughes B."/>
            <person name="Huizar L."/>
            <person name="Hunter J.L."/>
            <person name="Jenkins J."/>
            <person name="Johnson-Hopson C."/>
            <person name="Khan S."/>
            <person name="Khaykin E."/>
            <person name="Kim C.J."/>
            <person name="Koo H.L."/>
            <person name="Kremenetskaia I."/>
            <person name="Kurtz D.B."/>
            <person name="Kwan A."/>
            <person name="Lam B."/>
            <person name="Langin-Hooper S."/>
            <person name="Lee A."/>
            <person name="Lee J.M."/>
            <person name="Lenz C.A."/>
            <person name="Li J.H."/>
            <person name="Li Y.-P."/>
            <person name="Lin X."/>
            <person name="Liu S.X."/>
            <person name="Liu Z.A."/>
            <person name="Luros J.S."/>
            <person name="Maiti R."/>
            <person name="Marziali A."/>
            <person name="Militscher J."/>
            <person name="Miranda M."/>
            <person name="Nguyen M."/>
            <person name="Nierman W.C."/>
            <person name="Osborne B.I."/>
            <person name="Pai G."/>
            <person name="Peterson J."/>
            <person name="Pham P.K."/>
            <person name="Rizzo M."/>
            <person name="Rooney T."/>
            <person name="Rowley D."/>
            <person name="Sakano H."/>
            <person name="Salzberg S.L."/>
            <person name="Schwartz J.R."/>
            <person name="Shinn P."/>
            <person name="Southwick A.M."/>
            <person name="Sun H."/>
            <person name="Tallon L.J."/>
            <person name="Tambunga G."/>
            <person name="Toriumi M.J."/>
            <person name="Town C.D."/>
            <person name="Utterback T."/>
            <person name="Van Aken S."/>
            <person name="Vaysberg M."/>
            <person name="Vysotskaia V.S."/>
            <person name="Walker M."/>
            <person name="Wu D."/>
            <person name="Yu G."/>
            <person name="Fraser C.M."/>
            <person name="Venter J.C."/>
            <person name="Davis R.W."/>
        </authorList>
    </citation>
    <scope>NUCLEOTIDE SEQUENCE [LARGE SCALE GENOMIC DNA]</scope>
    <source>
        <strain>cv. Columbia</strain>
    </source>
</reference>
<reference key="4">
    <citation type="journal article" date="2017" name="Plant J.">
        <title>Araport11: a complete reannotation of the Arabidopsis thaliana reference genome.</title>
        <authorList>
            <person name="Cheng C.Y."/>
            <person name="Krishnakumar V."/>
            <person name="Chan A.P."/>
            <person name="Thibaud-Nissen F."/>
            <person name="Schobel S."/>
            <person name="Town C.D."/>
        </authorList>
    </citation>
    <scope>GENOME REANNOTATION</scope>
    <source>
        <strain>cv. Columbia</strain>
    </source>
</reference>
<reference key="5">
    <citation type="journal article" date="2003" name="Science">
        <title>Empirical analysis of transcriptional activity in the Arabidopsis genome.</title>
        <authorList>
            <person name="Yamada K."/>
            <person name="Lim J."/>
            <person name="Dale J.M."/>
            <person name="Chen H."/>
            <person name="Shinn P."/>
            <person name="Palm C.J."/>
            <person name="Southwick A.M."/>
            <person name="Wu H.C."/>
            <person name="Kim C.J."/>
            <person name="Nguyen M."/>
            <person name="Pham P.K."/>
            <person name="Cheuk R.F."/>
            <person name="Karlin-Newmann G."/>
            <person name="Liu S.X."/>
            <person name="Lam B."/>
            <person name="Sakano H."/>
            <person name="Wu T."/>
            <person name="Yu G."/>
            <person name="Miranda M."/>
            <person name="Quach H.L."/>
            <person name="Tripp M."/>
            <person name="Chang C.H."/>
            <person name="Lee J.M."/>
            <person name="Toriumi M.J."/>
            <person name="Chan M.M."/>
            <person name="Tang C.C."/>
            <person name="Onodera C.S."/>
            <person name="Deng J.M."/>
            <person name="Akiyama K."/>
            <person name="Ansari Y."/>
            <person name="Arakawa T."/>
            <person name="Banh J."/>
            <person name="Banno F."/>
            <person name="Bowser L."/>
            <person name="Brooks S.Y."/>
            <person name="Carninci P."/>
            <person name="Chao Q."/>
            <person name="Choy N."/>
            <person name="Enju A."/>
            <person name="Goldsmith A.D."/>
            <person name="Gurjal M."/>
            <person name="Hansen N.F."/>
            <person name="Hayashizaki Y."/>
            <person name="Johnson-Hopson C."/>
            <person name="Hsuan V.W."/>
            <person name="Iida K."/>
            <person name="Karnes M."/>
            <person name="Khan S."/>
            <person name="Koesema E."/>
            <person name="Ishida J."/>
            <person name="Jiang P.X."/>
            <person name="Jones T."/>
            <person name="Kawai J."/>
            <person name="Kamiya A."/>
            <person name="Meyers C."/>
            <person name="Nakajima M."/>
            <person name="Narusaka M."/>
            <person name="Seki M."/>
            <person name="Sakurai T."/>
            <person name="Satou M."/>
            <person name="Tamse R."/>
            <person name="Vaysberg M."/>
            <person name="Wallender E.K."/>
            <person name="Wong C."/>
            <person name="Yamamura Y."/>
            <person name="Yuan S."/>
            <person name="Shinozaki K."/>
            <person name="Davis R.W."/>
            <person name="Theologis A."/>
            <person name="Ecker J.R."/>
        </authorList>
    </citation>
    <scope>NUCLEOTIDE SEQUENCE [LARGE SCALE MRNA]</scope>
    <source>
        <strain>cv. Columbia</strain>
    </source>
</reference>
<reference key="6">
    <citation type="journal article" date="2002" name="J. Biol. Chem.">
        <title>Characterization of a family of IAA-amino acid conjugate hydrolases from Arabidopsis.</title>
        <authorList>
            <person name="LeClere S."/>
            <person name="Tellez R."/>
            <person name="Rampey R.A."/>
            <person name="Matsuda S.P.T."/>
            <person name="Bartel B."/>
        </authorList>
    </citation>
    <scope>GENE FAMILY</scope>
    <scope>FUNCTION</scope>
    <scope>BIOPHYSICOCHEMICAL PROPERTIES</scope>
    <scope>COFACTOR</scope>
    <scope>SUBSTRATE SPECIFICITY</scope>
</reference>
<reference key="7">
    <citation type="journal article" date="2004" name="Plant Physiol.">
        <title>A family of auxin-conjugate hydrolases that contributes to free indole-3-acetic acid levels during Arabidopsis germination.</title>
        <authorList>
            <person name="Rampey R.A."/>
            <person name="LeClere S."/>
            <person name="Kowalczyk M."/>
            <person name="Ljung K."/>
            <person name="Sandberg G."/>
            <person name="Bartel B."/>
        </authorList>
    </citation>
    <scope>FUNCTION</scope>
    <scope>TISSUE SPECIFICITY</scope>
</reference>
<reference key="8">
    <citation type="journal article" date="2013" name="J. Biol. Chem.">
        <title>The amidohydrolases IAR3 and ILL6 contribute to jasmonoyl-isoleucine hormone turnover and generate 12-hydroxyjasmonic acid upon wounding in Arabidopsis leaves.</title>
        <authorList>
            <person name="Widemann E."/>
            <person name="Miesch L."/>
            <person name="Lugan R."/>
            <person name="Holder E."/>
            <person name="Heinrich C."/>
            <person name="Aubert Y."/>
            <person name="Miesch M."/>
            <person name="Pinot F."/>
            <person name="Heitz T."/>
        </authorList>
    </citation>
    <scope>FUNCTION</scope>
    <scope>CATALYTIC ACTIVITY</scope>
</reference>
<comment type="function">
    <text evidence="4 5 6 7">Hydrolyzes certain amino acid conjugates of the plant growth regulator indole-3-acetic acid (IAA), including IAA-Ala, IAA-Asn, IAA-Cys, IAA-Glu, IAA-Met, IAA-Ser and IAA-Gly (PubMed:10072397, PubMed:11923288). Has a lower efficiency with IAA-Phe, IAA-Leu and IAA-Val and no activity with IAA-Ile (PubMed:10072397, PubMed:11923288). Important for IAA-Leu hydrolysis in roots (PubMed:15155875). Also hydrolyzes amino acid conjugates of jasmonic acid and 12-hydroxy jasmonic acid (PubMed:24052260).</text>
</comment>
<comment type="catalytic activity">
    <reaction evidence="7">
        <text>a jasmonyl-L-amino acid + H2O = a jasmonate + an L-alpha-amino acid</text>
        <dbReference type="Rhea" id="RHEA:52028"/>
        <dbReference type="ChEBI" id="CHEBI:15377"/>
        <dbReference type="ChEBI" id="CHEBI:59869"/>
        <dbReference type="ChEBI" id="CHEBI:136183"/>
        <dbReference type="ChEBI" id="CHEBI:136184"/>
        <dbReference type="EC" id="3.5.1.127"/>
    </reaction>
</comment>
<comment type="cofactor">
    <cofactor evidence="5">
        <name>Mn(2+)</name>
        <dbReference type="ChEBI" id="CHEBI:29035"/>
    </cofactor>
    <text evidence="5">The Mn(2+) ion enhances activity.</text>
</comment>
<comment type="biophysicochemical properties">
    <kinetics>
        <KM evidence="5">90 uM for IAA-Ala</KM>
        <Vmax evidence="5">20.0 nmol/min/mg enzyme with IAA-Ala as substrate</Vmax>
        <text evidence="5">kcat is 0.024 sec(-1) with IAA-Ala as substrate.</text>
    </kinetics>
    <phDependence>
        <text evidence="5">Optimum pH is 8.0.</text>
    </phDependence>
</comment>
<comment type="subcellular location">
    <subcellularLocation>
        <location evidence="3">Endoplasmic reticulum lumen</location>
    </subcellularLocation>
</comment>
<comment type="tissue specificity">
    <text evidence="4 6">Expressed in leaves, stems, roots, siliques and flowers. Detected in the vascular tissue of cotyledons and roots, in adult leaves, stems, siliques, petals, hydathodes and in silique abscission zones and funicles.</text>
</comment>
<comment type="induction">
    <text evidence="8">By jasmonic acid (JA) and by wounding.</text>
</comment>
<comment type="similarity">
    <text evidence="11">Belongs to the peptidase M20 family.</text>
</comment>
<evidence type="ECO:0000250" key="1">
    <source>
        <dbReference type="UniProtKB" id="P54970"/>
    </source>
</evidence>
<evidence type="ECO:0000255" key="2"/>
<evidence type="ECO:0000255" key="3">
    <source>
        <dbReference type="PROSITE-ProRule" id="PRU10138"/>
    </source>
</evidence>
<evidence type="ECO:0000269" key="4">
    <source>
    </source>
</evidence>
<evidence type="ECO:0000269" key="5">
    <source>
    </source>
</evidence>
<evidence type="ECO:0000269" key="6">
    <source>
    </source>
</evidence>
<evidence type="ECO:0000269" key="7">
    <source>
    </source>
</evidence>
<evidence type="ECO:0000269" key="8">
    <source>
    </source>
</evidence>
<evidence type="ECO:0000303" key="9">
    <source>
    </source>
</evidence>
<evidence type="ECO:0000303" key="10">
    <source>
    </source>
</evidence>
<evidence type="ECO:0000305" key="11"/>
<evidence type="ECO:0000312" key="12">
    <source>
        <dbReference type="Araport" id="AT1G51760"/>
    </source>
</evidence>
<evidence type="ECO:0000312" key="13">
    <source>
        <dbReference type="EMBL" id="AAG50883.1"/>
    </source>
</evidence>
<proteinExistence type="evidence at protein level"/>
<gene>
    <name evidence="9" type="primary">ILL4</name>
    <name evidence="9" type="synonym">IAR3</name>
    <name evidence="10" type="synonym">JR3</name>
    <name evidence="12" type="ordered locus">At1g51760</name>
    <name evidence="13" type="ORF">F19C24.4</name>
</gene>